<protein>
    <recommendedName>
        <fullName evidence="1">Large ribosomal subunit protein uL1</fullName>
    </recommendedName>
    <alternativeName>
        <fullName evidence="2">50S ribosomal protein L1</fullName>
    </alternativeName>
</protein>
<proteinExistence type="inferred from homology"/>
<sequence>MAKISKRVAKGREGIDRNRFYPLDEAVKVIKERATAKFDETIEVAMNLGVDPRHADQMVRGVVNLPNGTGRSVRVAVFAKGDKADEAKAAGADIVGAEDLVETVQKGEINFDRCIATPDMMPLVGRLGKVLGPRGLMPNPKVGTVTTDVAAAVKASKGGAVEFRVEKAGIVHAGVGKVSFDENAIAENVRAFADAVIKAKPSGAKGNYLKRVSITSTMGPGLKIDPSTLAAS</sequence>
<feature type="chain" id="PRO_0000308045" description="Large ribosomal subunit protein uL1">
    <location>
        <begin position="1"/>
        <end position="232"/>
    </location>
</feature>
<name>RL1_CHESB</name>
<organism>
    <name type="scientific">Chelativorans sp. (strain BNC1)</name>
    <dbReference type="NCBI Taxonomy" id="266779"/>
    <lineage>
        <taxon>Bacteria</taxon>
        <taxon>Pseudomonadati</taxon>
        <taxon>Pseudomonadota</taxon>
        <taxon>Alphaproteobacteria</taxon>
        <taxon>Hyphomicrobiales</taxon>
        <taxon>Phyllobacteriaceae</taxon>
        <taxon>Chelativorans</taxon>
    </lineage>
</organism>
<dbReference type="EMBL" id="CP000390">
    <property type="protein sequence ID" value="ABG63215.1"/>
    <property type="molecule type" value="Genomic_DNA"/>
</dbReference>
<dbReference type="SMR" id="Q11HB0"/>
<dbReference type="STRING" id="266779.Meso_1822"/>
<dbReference type="KEGG" id="mes:Meso_1822"/>
<dbReference type="eggNOG" id="COG0081">
    <property type="taxonomic scope" value="Bacteria"/>
</dbReference>
<dbReference type="HOGENOM" id="CLU_062853_0_0_5"/>
<dbReference type="OrthoDB" id="9803740at2"/>
<dbReference type="GO" id="GO:0022625">
    <property type="term" value="C:cytosolic large ribosomal subunit"/>
    <property type="evidence" value="ECO:0007669"/>
    <property type="project" value="TreeGrafter"/>
</dbReference>
<dbReference type="GO" id="GO:0019843">
    <property type="term" value="F:rRNA binding"/>
    <property type="evidence" value="ECO:0007669"/>
    <property type="project" value="UniProtKB-UniRule"/>
</dbReference>
<dbReference type="GO" id="GO:0003735">
    <property type="term" value="F:structural constituent of ribosome"/>
    <property type="evidence" value="ECO:0007669"/>
    <property type="project" value="InterPro"/>
</dbReference>
<dbReference type="GO" id="GO:0000049">
    <property type="term" value="F:tRNA binding"/>
    <property type="evidence" value="ECO:0007669"/>
    <property type="project" value="UniProtKB-KW"/>
</dbReference>
<dbReference type="GO" id="GO:0006417">
    <property type="term" value="P:regulation of translation"/>
    <property type="evidence" value="ECO:0007669"/>
    <property type="project" value="UniProtKB-KW"/>
</dbReference>
<dbReference type="GO" id="GO:0006412">
    <property type="term" value="P:translation"/>
    <property type="evidence" value="ECO:0007669"/>
    <property type="project" value="UniProtKB-UniRule"/>
</dbReference>
<dbReference type="CDD" id="cd00403">
    <property type="entry name" value="Ribosomal_L1"/>
    <property type="match status" value="1"/>
</dbReference>
<dbReference type="FunFam" id="3.40.50.790:FF:000001">
    <property type="entry name" value="50S ribosomal protein L1"/>
    <property type="match status" value="1"/>
</dbReference>
<dbReference type="Gene3D" id="3.30.190.20">
    <property type="match status" value="1"/>
</dbReference>
<dbReference type="Gene3D" id="3.40.50.790">
    <property type="match status" value="1"/>
</dbReference>
<dbReference type="HAMAP" id="MF_01318_B">
    <property type="entry name" value="Ribosomal_uL1_B"/>
    <property type="match status" value="1"/>
</dbReference>
<dbReference type="InterPro" id="IPR005878">
    <property type="entry name" value="Ribosom_uL1_bac-type"/>
</dbReference>
<dbReference type="InterPro" id="IPR002143">
    <property type="entry name" value="Ribosomal_uL1"/>
</dbReference>
<dbReference type="InterPro" id="IPR023674">
    <property type="entry name" value="Ribosomal_uL1-like"/>
</dbReference>
<dbReference type="InterPro" id="IPR028364">
    <property type="entry name" value="Ribosomal_uL1/biogenesis"/>
</dbReference>
<dbReference type="InterPro" id="IPR016095">
    <property type="entry name" value="Ribosomal_uL1_3-a/b-sand"/>
</dbReference>
<dbReference type="InterPro" id="IPR023673">
    <property type="entry name" value="Ribosomal_uL1_CS"/>
</dbReference>
<dbReference type="NCBIfam" id="TIGR01169">
    <property type="entry name" value="rplA_bact"/>
    <property type="match status" value="1"/>
</dbReference>
<dbReference type="PANTHER" id="PTHR36427">
    <property type="entry name" value="54S RIBOSOMAL PROTEIN L1, MITOCHONDRIAL"/>
    <property type="match status" value="1"/>
</dbReference>
<dbReference type="PANTHER" id="PTHR36427:SF3">
    <property type="entry name" value="LARGE RIBOSOMAL SUBUNIT PROTEIN UL1M"/>
    <property type="match status" value="1"/>
</dbReference>
<dbReference type="Pfam" id="PF00687">
    <property type="entry name" value="Ribosomal_L1"/>
    <property type="match status" value="1"/>
</dbReference>
<dbReference type="PIRSF" id="PIRSF002155">
    <property type="entry name" value="Ribosomal_L1"/>
    <property type="match status" value="1"/>
</dbReference>
<dbReference type="SUPFAM" id="SSF56808">
    <property type="entry name" value="Ribosomal protein L1"/>
    <property type="match status" value="1"/>
</dbReference>
<dbReference type="PROSITE" id="PS01199">
    <property type="entry name" value="RIBOSOMAL_L1"/>
    <property type="match status" value="1"/>
</dbReference>
<comment type="function">
    <text evidence="1">Binds directly to 23S rRNA. The L1 stalk is quite mobile in the ribosome, and is involved in E site tRNA release.</text>
</comment>
<comment type="function">
    <text evidence="1">Protein L1 is also a translational repressor protein, it controls the translation of the L11 operon by binding to its mRNA.</text>
</comment>
<comment type="subunit">
    <text evidence="1">Part of the 50S ribosomal subunit.</text>
</comment>
<comment type="similarity">
    <text evidence="1">Belongs to the universal ribosomal protein uL1 family.</text>
</comment>
<evidence type="ECO:0000255" key="1">
    <source>
        <dbReference type="HAMAP-Rule" id="MF_01318"/>
    </source>
</evidence>
<evidence type="ECO:0000305" key="2"/>
<keyword id="KW-0678">Repressor</keyword>
<keyword id="KW-0687">Ribonucleoprotein</keyword>
<keyword id="KW-0689">Ribosomal protein</keyword>
<keyword id="KW-0694">RNA-binding</keyword>
<keyword id="KW-0699">rRNA-binding</keyword>
<keyword id="KW-0810">Translation regulation</keyword>
<keyword id="KW-0820">tRNA-binding</keyword>
<reference key="1">
    <citation type="submission" date="2006-06" db="EMBL/GenBank/DDBJ databases">
        <title>Complete sequence of chromosome of Mesorhizobium sp. BNC1.</title>
        <authorList>
            <consortium name="US DOE Joint Genome Institute"/>
            <person name="Copeland A."/>
            <person name="Lucas S."/>
            <person name="Lapidus A."/>
            <person name="Barry K."/>
            <person name="Detter J.C."/>
            <person name="Glavina del Rio T."/>
            <person name="Hammon N."/>
            <person name="Israni S."/>
            <person name="Dalin E."/>
            <person name="Tice H."/>
            <person name="Pitluck S."/>
            <person name="Chertkov O."/>
            <person name="Brettin T."/>
            <person name="Bruce D."/>
            <person name="Han C."/>
            <person name="Tapia R."/>
            <person name="Gilna P."/>
            <person name="Schmutz J."/>
            <person name="Larimer F."/>
            <person name="Land M."/>
            <person name="Hauser L."/>
            <person name="Kyrpides N."/>
            <person name="Mikhailova N."/>
            <person name="Richardson P."/>
        </authorList>
    </citation>
    <scope>NUCLEOTIDE SEQUENCE [LARGE SCALE GENOMIC DNA]</scope>
    <source>
        <strain>BNC1</strain>
    </source>
</reference>
<accession>Q11HB0</accession>
<gene>
    <name evidence="1" type="primary">rplA</name>
    <name type="ordered locus">Meso_1822</name>
</gene>